<evidence type="ECO:0000250" key="1"/>
<evidence type="ECO:0000305" key="2"/>
<sequence>MSRRNISKKRFPEADSTYNSYLVSLLITRILKSGKKNLAQNIVNAAFEIIKVKTNEDPLVVFERAIRNASPVVEVKARRIGGSTYQVPVEVSGFRATNLSLRWIIQYSRQRVGRTMSIKLANEIIDTANDIGNTIKKKEETHKMQMPIKHLHIFVINY</sequence>
<geneLocation type="chloroplast"/>
<name>RR7_TRICV</name>
<organism>
    <name type="scientific">Trieres chinensis</name>
    <name type="common">Marine centric diatom</name>
    <name type="synonym">Odontella sinensis</name>
    <dbReference type="NCBI Taxonomy" id="1514140"/>
    <lineage>
        <taxon>Eukaryota</taxon>
        <taxon>Sar</taxon>
        <taxon>Stramenopiles</taxon>
        <taxon>Ochrophyta</taxon>
        <taxon>Bacillariophyta</taxon>
        <taxon>Mediophyceae</taxon>
        <taxon>Biddulphiophycidae</taxon>
        <taxon>Eupodiscales</taxon>
        <taxon>Parodontellaceae</taxon>
        <taxon>Trieres</taxon>
    </lineage>
</organism>
<accession>P49495</accession>
<reference key="1">
    <citation type="journal article" date="1995" name="Plant Mol. Biol. Rep.">
        <title>The chloroplast genome of a chlorophyll a+c-containing alga, Odontella sinensis.</title>
        <authorList>
            <person name="Kowallik K.V."/>
            <person name="Stoebe B."/>
            <person name="Schaffran I."/>
            <person name="Kroth-Pancic P."/>
            <person name="Freier U."/>
        </authorList>
    </citation>
    <scope>NUCLEOTIDE SEQUENCE [LARGE SCALE GENOMIC DNA]</scope>
</reference>
<dbReference type="EMBL" id="Z67753">
    <property type="protein sequence ID" value="CAA91622.1"/>
    <property type="molecule type" value="Genomic_DNA"/>
</dbReference>
<dbReference type="PIR" id="S78249">
    <property type="entry name" value="S78249"/>
</dbReference>
<dbReference type="RefSeq" id="NP_043590.1">
    <property type="nucleotide sequence ID" value="NC_001713.1"/>
</dbReference>
<dbReference type="SMR" id="P49495"/>
<dbReference type="GeneID" id="801786"/>
<dbReference type="GO" id="GO:0009507">
    <property type="term" value="C:chloroplast"/>
    <property type="evidence" value="ECO:0007669"/>
    <property type="project" value="UniProtKB-SubCell"/>
</dbReference>
<dbReference type="GO" id="GO:0015935">
    <property type="term" value="C:small ribosomal subunit"/>
    <property type="evidence" value="ECO:0007669"/>
    <property type="project" value="InterPro"/>
</dbReference>
<dbReference type="GO" id="GO:0019843">
    <property type="term" value="F:rRNA binding"/>
    <property type="evidence" value="ECO:0007669"/>
    <property type="project" value="UniProtKB-UniRule"/>
</dbReference>
<dbReference type="GO" id="GO:0003735">
    <property type="term" value="F:structural constituent of ribosome"/>
    <property type="evidence" value="ECO:0007669"/>
    <property type="project" value="InterPro"/>
</dbReference>
<dbReference type="GO" id="GO:0006412">
    <property type="term" value="P:translation"/>
    <property type="evidence" value="ECO:0007669"/>
    <property type="project" value="UniProtKB-UniRule"/>
</dbReference>
<dbReference type="CDD" id="cd14871">
    <property type="entry name" value="uS7_Chloroplast"/>
    <property type="match status" value="1"/>
</dbReference>
<dbReference type="Gene3D" id="1.10.455.10">
    <property type="entry name" value="Ribosomal protein S7 domain"/>
    <property type="match status" value="1"/>
</dbReference>
<dbReference type="HAMAP" id="MF_00480_B">
    <property type="entry name" value="Ribosomal_uS7_B"/>
    <property type="match status" value="1"/>
</dbReference>
<dbReference type="InterPro" id="IPR000235">
    <property type="entry name" value="Ribosomal_uS7"/>
</dbReference>
<dbReference type="InterPro" id="IPR005717">
    <property type="entry name" value="Ribosomal_uS7_bac/org-type"/>
</dbReference>
<dbReference type="InterPro" id="IPR020606">
    <property type="entry name" value="Ribosomal_uS7_CS"/>
</dbReference>
<dbReference type="InterPro" id="IPR023798">
    <property type="entry name" value="Ribosomal_uS7_dom"/>
</dbReference>
<dbReference type="InterPro" id="IPR036823">
    <property type="entry name" value="Ribosomal_uS7_dom_sf"/>
</dbReference>
<dbReference type="NCBIfam" id="TIGR01029">
    <property type="entry name" value="rpsG_bact"/>
    <property type="match status" value="1"/>
</dbReference>
<dbReference type="PANTHER" id="PTHR11205">
    <property type="entry name" value="RIBOSOMAL PROTEIN S7"/>
    <property type="match status" value="1"/>
</dbReference>
<dbReference type="Pfam" id="PF00177">
    <property type="entry name" value="Ribosomal_S7"/>
    <property type="match status" value="1"/>
</dbReference>
<dbReference type="PIRSF" id="PIRSF002122">
    <property type="entry name" value="RPS7p_RPS7a_RPS5e_RPS7o"/>
    <property type="match status" value="1"/>
</dbReference>
<dbReference type="SUPFAM" id="SSF47973">
    <property type="entry name" value="Ribosomal protein S7"/>
    <property type="match status" value="1"/>
</dbReference>
<dbReference type="PROSITE" id="PS00052">
    <property type="entry name" value="RIBOSOMAL_S7"/>
    <property type="match status" value="1"/>
</dbReference>
<proteinExistence type="inferred from homology"/>
<protein>
    <recommendedName>
        <fullName evidence="2">Small ribosomal subunit protein uS7c</fullName>
    </recommendedName>
    <alternativeName>
        <fullName>30S ribosomal protein S7, chloroplastic</fullName>
    </alternativeName>
</protein>
<feature type="chain" id="PRO_0000124481" description="Small ribosomal subunit protein uS7c">
    <location>
        <begin position="1"/>
        <end position="158"/>
    </location>
</feature>
<gene>
    <name type="primary">rps7</name>
</gene>
<keyword id="KW-0150">Chloroplast</keyword>
<keyword id="KW-0934">Plastid</keyword>
<keyword id="KW-0687">Ribonucleoprotein</keyword>
<keyword id="KW-0689">Ribosomal protein</keyword>
<keyword id="KW-0694">RNA-binding</keyword>
<keyword id="KW-0699">rRNA-binding</keyword>
<comment type="function">
    <text evidence="1">One of the primary rRNA binding proteins, it binds directly to 16S rRNA where it nucleates assembly of the head domain of the 30S subunit.</text>
</comment>
<comment type="subunit">
    <text>Part of the 30S ribosomal subunit.</text>
</comment>
<comment type="subcellular location">
    <subcellularLocation>
        <location>Plastid</location>
        <location>Chloroplast</location>
    </subcellularLocation>
</comment>
<comment type="similarity">
    <text evidence="2">Belongs to the universal ribosomal protein uS7 family.</text>
</comment>